<sequence>MLQQKFPQAAKSFFTIDSFIKNSKQDFVLVTSNEEEALQLYKQALFFLPSENIYYFPSYDTIPYDHTSPNCNILSKRAETLSKLTTNKGNKLVITHATNLLNKLPPKDFFAKYYLKLFPKMKLSANELSKFLVENSFTRNASTVDVGEFAVRGEIVDLILPESKGYRINFSWDYVESIKQFDIDTQISTRSCNELIISPANEIVLNPETISNFKDNYLRNFGVNHTDNPLYEAITGGRKFSGYEQLLPLFYDSYSGLTDYLNNPVIIFDNLTKQAILEFEHSYNDFYKARLDANKLKFNSFYPTLSPSQLYFTSLEAIELLEQENNILISYENSEQASIVENIAAASFVEKKTIFDKLFEVIKANSRKKIIIGSSVLSSFERVKSIIENYEYSYNEIEYLEEAKTNTINIAILPLNQSFSTPEYLFIAASELLEEKVTPTNTNKKLKNILLELDHLAEGELIVHKDHGIGQFLKLEALEIKGKLHDFLKILYAGNDKLYIPVENIEVIKKYGSDVAQLDKLGSVSWQKNKAKLKNRIKEIALHLMQIAAKRKLNTTAAIEFDLEEYDKFCAKFPFTETEDQLNAINDIREDLSNGMLMDRLICGDVGFGKTEVAMRAAFMVAKSLNENSPQVAVVVPTTILCSQHFARFTERFKDSDLNIKQLSSVVSSKEAKIVRSELESGKINIIIGTHSLLHKVTKFCNLKLLIIDEEQHFGVGQKEFLKSLKSSTHVLAMSATPIPRTLQMSMTGLKELSIIATPPLNRLEVRTSVMPFDPVIIRDALLHEHFRGGKSFFVVPRINDIEDIEKQLKQIVPELSYKVAHGKMSPNKIDEIMSEFYAGKFDILISTTIIESGIDIQDANTMIIHKADMLGLSQLYQLRGRIGRGKMRGYAYLTLPSHKKMTPHSLRRLEIIQNSCALGSGFTIASHDMDLRGFGNLIGEEQSGQIREVGTELYQEMLEEQIAIFKDEPISGEQPFIPTINLGLSVFIPDNYVSDSVLKLGLYRRIGNLNDDLEVEKFKDEMIDRFGSLPTEFNNLLDIVKIKLLCFKLNIENLDSGDNGFVIKFYKNADMADKILKFVSTYTANAKIKPDNKLVFIKKLVGKTIITEANQLLWNLSEI</sequence>
<accession>Q1RI82</accession>
<proteinExistence type="inferred from homology"/>
<comment type="function">
    <text evidence="1">Couples transcription and DNA repair by recognizing RNA polymerase (RNAP) stalled at DNA lesions. Mediates ATP-dependent release of RNAP and its truncated transcript from the DNA, and recruitment of nucleotide excision repair machinery to the damaged site.</text>
</comment>
<comment type="subcellular location">
    <subcellularLocation>
        <location evidence="1">Cytoplasm</location>
    </subcellularLocation>
</comment>
<comment type="similarity">
    <text evidence="1">In the N-terminal section; belongs to the UvrB family.</text>
</comment>
<comment type="similarity">
    <text evidence="1">In the C-terminal section; belongs to the helicase family. RecG subfamily.</text>
</comment>
<name>MFD_RICBR</name>
<organism>
    <name type="scientific">Rickettsia bellii (strain RML369-C)</name>
    <dbReference type="NCBI Taxonomy" id="336407"/>
    <lineage>
        <taxon>Bacteria</taxon>
        <taxon>Pseudomonadati</taxon>
        <taxon>Pseudomonadota</taxon>
        <taxon>Alphaproteobacteria</taxon>
        <taxon>Rickettsiales</taxon>
        <taxon>Rickettsiaceae</taxon>
        <taxon>Rickettsieae</taxon>
        <taxon>Rickettsia</taxon>
        <taxon>belli group</taxon>
    </lineage>
</organism>
<reference key="1">
    <citation type="journal article" date="2006" name="PLoS Genet.">
        <title>Genome sequence of Rickettsia bellii illuminates the role of amoebae in gene exchanges between intracellular pathogens.</title>
        <authorList>
            <person name="Ogata H."/>
            <person name="La Scola B."/>
            <person name="Audic S."/>
            <person name="Renesto P."/>
            <person name="Blanc G."/>
            <person name="Robert C."/>
            <person name="Fournier P.-E."/>
            <person name="Claverie J.-M."/>
            <person name="Raoult D."/>
        </authorList>
    </citation>
    <scope>NUCLEOTIDE SEQUENCE [LARGE SCALE GENOMIC DNA]</scope>
    <source>
        <strain>RML369-C</strain>
    </source>
</reference>
<keyword id="KW-0067">ATP-binding</keyword>
<keyword id="KW-0963">Cytoplasm</keyword>
<keyword id="KW-0227">DNA damage</keyword>
<keyword id="KW-0234">DNA repair</keyword>
<keyword id="KW-0238">DNA-binding</keyword>
<keyword id="KW-0347">Helicase</keyword>
<keyword id="KW-0378">Hydrolase</keyword>
<keyword id="KW-0547">Nucleotide-binding</keyword>
<evidence type="ECO:0000255" key="1">
    <source>
        <dbReference type="HAMAP-Rule" id="MF_00969"/>
    </source>
</evidence>
<gene>
    <name evidence="1" type="primary">mfd</name>
    <name type="ordered locus">RBE_0851</name>
</gene>
<protein>
    <recommendedName>
        <fullName evidence="1">Transcription-repair-coupling factor</fullName>
        <shortName evidence="1">TRCF</shortName>
        <ecNumber evidence="1">3.6.4.-</ecNumber>
    </recommendedName>
</protein>
<dbReference type="EC" id="3.6.4.-" evidence="1"/>
<dbReference type="EMBL" id="CP000087">
    <property type="protein sequence ID" value="ABE04932.1"/>
    <property type="molecule type" value="Genomic_DNA"/>
</dbReference>
<dbReference type="RefSeq" id="WP_011477517.1">
    <property type="nucleotide sequence ID" value="NC_007940.1"/>
</dbReference>
<dbReference type="SMR" id="Q1RI82"/>
<dbReference type="KEGG" id="rbe:RBE_0851"/>
<dbReference type="eggNOG" id="COG1197">
    <property type="taxonomic scope" value="Bacteria"/>
</dbReference>
<dbReference type="HOGENOM" id="CLU_005122_3_2_5"/>
<dbReference type="OrthoDB" id="9804325at2"/>
<dbReference type="Proteomes" id="UP000001951">
    <property type="component" value="Chromosome"/>
</dbReference>
<dbReference type="GO" id="GO:0005737">
    <property type="term" value="C:cytoplasm"/>
    <property type="evidence" value="ECO:0007669"/>
    <property type="project" value="UniProtKB-SubCell"/>
</dbReference>
<dbReference type="GO" id="GO:0005524">
    <property type="term" value="F:ATP binding"/>
    <property type="evidence" value="ECO:0007669"/>
    <property type="project" value="UniProtKB-UniRule"/>
</dbReference>
<dbReference type="GO" id="GO:0003684">
    <property type="term" value="F:damaged DNA binding"/>
    <property type="evidence" value="ECO:0007669"/>
    <property type="project" value="InterPro"/>
</dbReference>
<dbReference type="GO" id="GO:0003678">
    <property type="term" value="F:DNA helicase activity"/>
    <property type="evidence" value="ECO:0007669"/>
    <property type="project" value="TreeGrafter"/>
</dbReference>
<dbReference type="GO" id="GO:0016787">
    <property type="term" value="F:hydrolase activity"/>
    <property type="evidence" value="ECO:0007669"/>
    <property type="project" value="UniProtKB-KW"/>
</dbReference>
<dbReference type="GO" id="GO:0006355">
    <property type="term" value="P:regulation of DNA-templated transcription"/>
    <property type="evidence" value="ECO:0007669"/>
    <property type="project" value="UniProtKB-UniRule"/>
</dbReference>
<dbReference type="GO" id="GO:0000716">
    <property type="term" value="P:transcription-coupled nucleotide-excision repair, DNA damage recognition"/>
    <property type="evidence" value="ECO:0007669"/>
    <property type="project" value="UniProtKB-UniRule"/>
</dbReference>
<dbReference type="CDD" id="cd17991">
    <property type="entry name" value="DEXHc_TRCF"/>
    <property type="match status" value="1"/>
</dbReference>
<dbReference type="CDD" id="cd18810">
    <property type="entry name" value="SF2_C_TRCF"/>
    <property type="match status" value="1"/>
</dbReference>
<dbReference type="Gene3D" id="2.40.10.170">
    <property type="match status" value="1"/>
</dbReference>
<dbReference type="Gene3D" id="3.40.50.11180">
    <property type="match status" value="1"/>
</dbReference>
<dbReference type="Gene3D" id="3.40.50.300">
    <property type="entry name" value="P-loop containing nucleotide triphosphate hydrolases"/>
    <property type="match status" value="2"/>
</dbReference>
<dbReference type="Gene3D" id="3.30.2060.10">
    <property type="entry name" value="Penicillin-binding protein 1b domain"/>
    <property type="match status" value="1"/>
</dbReference>
<dbReference type="Gene3D" id="3.90.1150.50">
    <property type="entry name" value="Transcription-repair-coupling factor, D7 domain"/>
    <property type="match status" value="1"/>
</dbReference>
<dbReference type="HAMAP" id="MF_00969">
    <property type="entry name" value="TRCF"/>
    <property type="match status" value="1"/>
</dbReference>
<dbReference type="InterPro" id="IPR003711">
    <property type="entry name" value="CarD-like/TRCF_RID"/>
</dbReference>
<dbReference type="InterPro" id="IPR036101">
    <property type="entry name" value="CarD-like/TRCF_RID_sf"/>
</dbReference>
<dbReference type="InterPro" id="IPR011545">
    <property type="entry name" value="DEAD/DEAH_box_helicase_dom"/>
</dbReference>
<dbReference type="InterPro" id="IPR014001">
    <property type="entry name" value="Helicase_ATP-bd"/>
</dbReference>
<dbReference type="InterPro" id="IPR001650">
    <property type="entry name" value="Helicase_C-like"/>
</dbReference>
<dbReference type="InterPro" id="IPR004576">
    <property type="entry name" value="Mfd"/>
</dbReference>
<dbReference type="InterPro" id="IPR027417">
    <property type="entry name" value="P-loop_NTPase"/>
</dbReference>
<dbReference type="InterPro" id="IPR047112">
    <property type="entry name" value="RecG/Mfd"/>
</dbReference>
<dbReference type="InterPro" id="IPR037235">
    <property type="entry name" value="TRCF-like_C_D7"/>
</dbReference>
<dbReference type="InterPro" id="IPR005118">
    <property type="entry name" value="TRCF_C"/>
</dbReference>
<dbReference type="InterPro" id="IPR041471">
    <property type="entry name" value="UvrB_inter"/>
</dbReference>
<dbReference type="NCBIfam" id="TIGR00580">
    <property type="entry name" value="mfd"/>
    <property type="match status" value="1"/>
</dbReference>
<dbReference type="PANTHER" id="PTHR47964">
    <property type="entry name" value="ATP-DEPENDENT DNA HELICASE HOMOLOG RECG, CHLOROPLASTIC"/>
    <property type="match status" value="1"/>
</dbReference>
<dbReference type="PANTHER" id="PTHR47964:SF1">
    <property type="entry name" value="ATP-DEPENDENT DNA HELICASE HOMOLOG RECG, CHLOROPLASTIC"/>
    <property type="match status" value="1"/>
</dbReference>
<dbReference type="Pfam" id="PF02559">
    <property type="entry name" value="CarD_TRCF_RID"/>
    <property type="match status" value="1"/>
</dbReference>
<dbReference type="Pfam" id="PF00270">
    <property type="entry name" value="DEAD"/>
    <property type="match status" value="1"/>
</dbReference>
<dbReference type="Pfam" id="PF00271">
    <property type="entry name" value="Helicase_C"/>
    <property type="match status" value="1"/>
</dbReference>
<dbReference type="Pfam" id="PF03461">
    <property type="entry name" value="TRCF"/>
    <property type="match status" value="1"/>
</dbReference>
<dbReference type="Pfam" id="PF17757">
    <property type="entry name" value="UvrB_inter"/>
    <property type="match status" value="1"/>
</dbReference>
<dbReference type="SMART" id="SM01058">
    <property type="entry name" value="CarD_TRCF"/>
    <property type="match status" value="1"/>
</dbReference>
<dbReference type="SMART" id="SM00487">
    <property type="entry name" value="DEXDc"/>
    <property type="match status" value="1"/>
</dbReference>
<dbReference type="SMART" id="SM00490">
    <property type="entry name" value="HELICc"/>
    <property type="match status" value="1"/>
</dbReference>
<dbReference type="SMART" id="SM00982">
    <property type="entry name" value="TRCF"/>
    <property type="match status" value="1"/>
</dbReference>
<dbReference type="SUPFAM" id="SSF141259">
    <property type="entry name" value="CarD-like"/>
    <property type="match status" value="1"/>
</dbReference>
<dbReference type="SUPFAM" id="SSF52540">
    <property type="entry name" value="P-loop containing nucleoside triphosphate hydrolases"/>
    <property type="match status" value="2"/>
</dbReference>
<dbReference type="SUPFAM" id="SSF143517">
    <property type="entry name" value="TRCF domain-like"/>
    <property type="match status" value="1"/>
</dbReference>
<dbReference type="PROSITE" id="PS51192">
    <property type="entry name" value="HELICASE_ATP_BIND_1"/>
    <property type="match status" value="1"/>
</dbReference>
<dbReference type="PROSITE" id="PS51194">
    <property type="entry name" value="HELICASE_CTER"/>
    <property type="match status" value="1"/>
</dbReference>
<feature type="chain" id="PRO_0000281071" description="Transcription-repair-coupling factor">
    <location>
        <begin position="1"/>
        <end position="1120"/>
    </location>
</feature>
<feature type="domain" description="Helicase ATP-binding" evidence="1">
    <location>
        <begin position="591"/>
        <end position="756"/>
    </location>
</feature>
<feature type="domain" description="Helicase C-terminal" evidence="1">
    <location>
        <begin position="777"/>
        <end position="931"/>
    </location>
</feature>
<feature type="short sequence motif" description="DEEQ box">
    <location>
        <begin position="709"/>
        <end position="712"/>
    </location>
</feature>
<feature type="binding site" evidence="1">
    <location>
        <begin position="604"/>
        <end position="611"/>
    </location>
    <ligand>
        <name>ATP</name>
        <dbReference type="ChEBI" id="CHEBI:30616"/>
    </ligand>
</feature>